<evidence type="ECO:0000255" key="1">
    <source>
        <dbReference type="HAMAP-Rule" id="MF_00564"/>
    </source>
</evidence>
<reference key="1">
    <citation type="journal article" date="2008" name="J. Bacteriol.">
        <title>Comparative genome sequence analysis of multidrug-resistant Acinetobacter baumannii.</title>
        <authorList>
            <person name="Adams M.D."/>
            <person name="Goglin K."/>
            <person name="Molyneaux N."/>
            <person name="Hujer K.M."/>
            <person name="Lavender H."/>
            <person name="Jamison J.J."/>
            <person name="MacDonald I.J."/>
            <person name="Martin K.M."/>
            <person name="Russo T."/>
            <person name="Campagnari A.A."/>
            <person name="Hujer A.M."/>
            <person name="Bonomo R.A."/>
            <person name="Gill S.R."/>
        </authorList>
    </citation>
    <scope>NUCLEOTIDE SEQUENCE [LARGE SCALE GENOMIC DNA]</scope>
    <source>
        <strain>AB0057</strain>
    </source>
</reference>
<name>RNPH_ACIB5</name>
<feature type="chain" id="PRO_1000129307" description="Ribonuclease PH">
    <location>
        <begin position="1"/>
        <end position="238"/>
    </location>
</feature>
<feature type="binding site" evidence="1">
    <location>
        <position position="86"/>
    </location>
    <ligand>
        <name>phosphate</name>
        <dbReference type="ChEBI" id="CHEBI:43474"/>
        <note>substrate</note>
    </ligand>
</feature>
<feature type="binding site" evidence="1">
    <location>
        <begin position="124"/>
        <end position="126"/>
    </location>
    <ligand>
        <name>phosphate</name>
        <dbReference type="ChEBI" id="CHEBI:43474"/>
        <note>substrate</note>
    </ligand>
</feature>
<comment type="function">
    <text evidence="1">Phosphorolytic 3'-5' exoribonuclease that plays an important role in tRNA 3'-end maturation. Removes nucleotide residues following the 3'-CCA terminus of tRNAs; can also add nucleotides to the ends of RNA molecules by using nucleoside diphosphates as substrates, but this may not be physiologically important. Probably plays a role in initiation of 16S rRNA degradation (leading to ribosome degradation) during starvation.</text>
</comment>
<comment type="catalytic activity">
    <reaction evidence="1">
        <text>tRNA(n+1) + phosphate = tRNA(n) + a ribonucleoside 5'-diphosphate</text>
        <dbReference type="Rhea" id="RHEA:10628"/>
        <dbReference type="Rhea" id="RHEA-COMP:17343"/>
        <dbReference type="Rhea" id="RHEA-COMP:17344"/>
        <dbReference type="ChEBI" id="CHEBI:43474"/>
        <dbReference type="ChEBI" id="CHEBI:57930"/>
        <dbReference type="ChEBI" id="CHEBI:173114"/>
        <dbReference type="EC" id="2.7.7.56"/>
    </reaction>
</comment>
<comment type="subunit">
    <text evidence="1">Homohexameric ring arranged as a trimer of dimers.</text>
</comment>
<comment type="similarity">
    <text evidence="1">Belongs to the RNase PH family.</text>
</comment>
<gene>
    <name evidence="1" type="primary">rph</name>
    <name type="ordered locus">AB57_0082</name>
</gene>
<proteinExistence type="inferred from homology"/>
<protein>
    <recommendedName>
        <fullName evidence="1">Ribonuclease PH</fullName>
        <shortName evidence="1">RNase PH</shortName>
        <ecNumber evidence="1">2.7.7.56</ecNumber>
    </recommendedName>
    <alternativeName>
        <fullName evidence="1">tRNA nucleotidyltransferase</fullName>
    </alternativeName>
</protein>
<dbReference type="EC" id="2.7.7.56" evidence="1"/>
<dbReference type="EMBL" id="CP001182">
    <property type="protein sequence ID" value="ACJ39513.1"/>
    <property type="molecule type" value="Genomic_DNA"/>
</dbReference>
<dbReference type="RefSeq" id="WP_001217232.1">
    <property type="nucleotide sequence ID" value="NC_011586.2"/>
</dbReference>
<dbReference type="SMR" id="B7IBN8"/>
<dbReference type="GeneID" id="92892004"/>
<dbReference type="KEGG" id="abn:AB57_0082"/>
<dbReference type="HOGENOM" id="CLU_050858_0_0_6"/>
<dbReference type="Proteomes" id="UP000007094">
    <property type="component" value="Chromosome"/>
</dbReference>
<dbReference type="GO" id="GO:0000175">
    <property type="term" value="F:3'-5'-RNA exonuclease activity"/>
    <property type="evidence" value="ECO:0007669"/>
    <property type="project" value="UniProtKB-UniRule"/>
</dbReference>
<dbReference type="GO" id="GO:0000049">
    <property type="term" value="F:tRNA binding"/>
    <property type="evidence" value="ECO:0007669"/>
    <property type="project" value="UniProtKB-UniRule"/>
</dbReference>
<dbReference type="GO" id="GO:0009022">
    <property type="term" value="F:tRNA nucleotidyltransferase activity"/>
    <property type="evidence" value="ECO:0007669"/>
    <property type="project" value="UniProtKB-UniRule"/>
</dbReference>
<dbReference type="GO" id="GO:0016075">
    <property type="term" value="P:rRNA catabolic process"/>
    <property type="evidence" value="ECO:0007669"/>
    <property type="project" value="UniProtKB-UniRule"/>
</dbReference>
<dbReference type="GO" id="GO:0006364">
    <property type="term" value="P:rRNA processing"/>
    <property type="evidence" value="ECO:0007669"/>
    <property type="project" value="UniProtKB-KW"/>
</dbReference>
<dbReference type="GO" id="GO:0008033">
    <property type="term" value="P:tRNA processing"/>
    <property type="evidence" value="ECO:0007669"/>
    <property type="project" value="UniProtKB-UniRule"/>
</dbReference>
<dbReference type="CDD" id="cd11362">
    <property type="entry name" value="RNase_PH_bact"/>
    <property type="match status" value="1"/>
</dbReference>
<dbReference type="FunFam" id="3.30.230.70:FF:000003">
    <property type="entry name" value="Ribonuclease PH"/>
    <property type="match status" value="1"/>
</dbReference>
<dbReference type="Gene3D" id="3.30.230.70">
    <property type="entry name" value="GHMP Kinase, N-terminal domain"/>
    <property type="match status" value="1"/>
</dbReference>
<dbReference type="HAMAP" id="MF_00564">
    <property type="entry name" value="RNase_PH"/>
    <property type="match status" value="1"/>
</dbReference>
<dbReference type="InterPro" id="IPR001247">
    <property type="entry name" value="ExoRNase_PH_dom1"/>
</dbReference>
<dbReference type="InterPro" id="IPR015847">
    <property type="entry name" value="ExoRNase_PH_dom2"/>
</dbReference>
<dbReference type="InterPro" id="IPR036345">
    <property type="entry name" value="ExoRNase_PH_dom2_sf"/>
</dbReference>
<dbReference type="InterPro" id="IPR027408">
    <property type="entry name" value="PNPase/RNase_PH_dom_sf"/>
</dbReference>
<dbReference type="InterPro" id="IPR020568">
    <property type="entry name" value="Ribosomal_Su5_D2-typ_SF"/>
</dbReference>
<dbReference type="InterPro" id="IPR050080">
    <property type="entry name" value="RNase_PH"/>
</dbReference>
<dbReference type="InterPro" id="IPR002381">
    <property type="entry name" value="RNase_PH_bac-type"/>
</dbReference>
<dbReference type="InterPro" id="IPR018336">
    <property type="entry name" value="RNase_PH_CS"/>
</dbReference>
<dbReference type="NCBIfam" id="TIGR01966">
    <property type="entry name" value="RNasePH"/>
    <property type="match status" value="1"/>
</dbReference>
<dbReference type="PANTHER" id="PTHR11953">
    <property type="entry name" value="EXOSOME COMPLEX COMPONENT"/>
    <property type="match status" value="1"/>
</dbReference>
<dbReference type="PANTHER" id="PTHR11953:SF0">
    <property type="entry name" value="EXOSOME COMPLEX COMPONENT RRP41"/>
    <property type="match status" value="1"/>
</dbReference>
<dbReference type="Pfam" id="PF01138">
    <property type="entry name" value="RNase_PH"/>
    <property type="match status" value="1"/>
</dbReference>
<dbReference type="Pfam" id="PF03725">
    <property type="entry name" value="RNase_PH_C"/>
    <property type="match status" value="1"/>
</dbReference>
<dbReference type="SUPFAM" id="SSF55666">
    <property type="entry name" value="Ribonuclease PH domain 2-like"/>
    <property type="match status" value="1"/>
</dbReference>
<dbReference type="SUPFAM" id="SSF54211">
    <property type="entry name" value="Ribosomal protein S5 domain 2-like"/>
    <property type="match status" value="1"/>
</dbReference>
<dbReference type="PROSITE" id="PS01277">
    <property type="entry name" value="RIBONUCLEASE_PH"/>
    <property type="match status" value="1"/>
</dbReference>
<organism>
    <name type="scientific">Acinetobacter baumannii (strain AB0057)</name>
    <dbReference type="NCBI Taxonomy" id="480119"/>
    <lineage>
        <taxon>Bacteria</taxon>
        <taxon>Pseudomonadati</taxon>
        <taxon>Pseudomonadota</taxon>
        <taxon>Gammaproteobacteria</taxon>
        <taxon>Moraxellales</taxon>
        <taxon>Moraxellaceae</taxon>
        <taxon>Acinetobacter</taxon>
        <taxon>Acinetobacter calcoaceticus/baumannii complex</taxon>
    </lineage>
</organism>
<keyword id="KW-0548">Nucleotidyltransferase</keyword>
<keyword id="KW-0694">RNA-binding</keyword>
<keyword id="KW-0698">rRNA processing</keyword>
<keyword id="KW-0808">Transferase</keyword>
<keyword id="KW-0819">tRNA processing</keyword>
<keyword id="KW-0820">tRNA-binding</keyword>
<accession>B7IBN8</accession>
<sequence>MRIDQRALDQLREVKITRNYTRYAEGSVLVEFGHTKVLCTASIDNSVPRFLKGQGQGWVTAEYGMLPRSTHSRCDREAARGKQTGRTQEIQRLIGRSLRAMVDLKKLGENTITIDCDVIQADGGTRTASITGAAVALVDAMNVLLAQKKIKQDPLKGLVAAISVGMYQDEVLLDLCYEEDSNCQTDLNVVMTQAGEFIEIQGTAEDKPFTRAQSNAMLEMAEKGIAELIKKQQEALGW</sequence>